<dbReference type="GO" id="GO:0005576">
    <property type="term" value="C:extracellular region"/>
    <property type="evidence" value="ECO:0007669"/>
    <property type="project" value="UniProtKB-KW"/>
</dbReference>
<accession>P80752</accession>
<comment type="subcellular location">
    <subcellularLocation>
        <location evidence="1">Secreted</location>
        <location evidence="1">Cell wall</location>
    </subcellularLocation>
</comment>
<protein>
    <recommendedName>
        <fullName>58 kDa cell wall protein</fullName>
    </recommendedName>
</protein>
<proteinExistence type="evidence at protein level"/>
<sequence>QLAELKYVI</sequence>
<evidence type="ECO:0000269" key="1">
    <source>
    </source>
</evidence>
<evidence type="ECO:0000303" key="2">
    <source>
    </source>
</evidence>
<evidence type="ECO:0000305" key="3"/>
<keyword id="KW-0134">Cell wall</keyword>
<keyword id="KW-0903">Direct protein sequencing</keyword>
<keyword id="KW-0964">Secreted</keyword>
<reference evidence="3" key="1">
    <citation type="journal article" date="1997" name="J. Biol. Chem.">
        <title>Differential extraction and protein sequencing reveals major differences in patterns of primary cell wall proteins from plants.</title>
        <authorList>
            <person name="Robertson D."/>
            <person name="Mitchell G.P."/>
            <person name="Gilroy J.S."/>
            <person name="Gerrish C."/>
            <person name="Bolwell G.P."/>
            <person name="Slabas A.R."/>
        </authorList>
    </citation>
    <scope>PROTEIN SEQUENCE</scope>
    <scope>SUBCELLULAR LOCATION</scope>
</reference>
<organism>
    <name type="scientific">Daucus carota</name>
    <name type="common">Wild carrot</name>
    <dbReference type="NCBI Taxonomy" id="4039"/>
    <lineage>
        <taxon>Eukaryota</taxon>
        <taxon>Viridiplantae</taxon>
        <taxon>Streptophyta</taxon>
        <taxon>Embryophyta</taxon>
        <taxon>Tracheophyta</taxon>
        <taxon>Spermatophyta</taxon>
        <taxon>Magnoliopsida</taxon>
        <taxon>eudicotyledons</taxon>
        <taxon>Gunneridae</taxon>
        <taxon>Pentapetalae</taxon>
        <taxon>asterids</taxon>
        <taxon>campanulids</taxon>
        <taxon>Apiales</taxon>
        <taxon>Apiaceae</taxon>
        <taxon>Apioideae</taxon>
        <taxon>Scandiceae</taxon>
        <taxon>Daucinae</taxon>
        <taxon>Daucus</taxon>
        <taxon>Daucus sect. Daucus</taxon>
    </lineage>
</organism>
<name>CWP02_DAUCA</name>
<feature type="chain" id="PRO_0000079624" description="58 kDa cell wall protein">
    <location>
        <begin position="1"/>
        <end position="9" status="greater than"/>
    </location>
</feature>
<feature type="non-terminal residue" evidence="2">
    <location>
        <position position="9"/>
    </location>
</feature>